<evidence type="ECO:0000255" key="1">
    <source>
        <dbReference type="HAMAP-Rule" id="MF_00180"/>
    </source>
</evidence>
<accession>Q8D485</accession>
<name>RIBB_VIBVU</name>
<dbReference type="EC" id="4.1.99.12" evidence="1"/>
<dbReference type="EMBL" id="AE016796">
    <property type="protein sequence ID" value="AAO08305.1"/>
    <property type="molecule type" value="Genomic_DNA"/>
</dbReference>
<dbReference type="RefSeq" id="WP_011082301.1">
    <property type="nucleotide sequence ID" value="NC_004460.2"/>
</dbReference>
<dbReference type="SMR" id="Q8D485"/>
<dbReference type="KEGG" id="vvu:VV2_1426"/>
<dbReference type="HOGENOM" id="CLU_020273_3_0_6"/>
<dbReference type="UniPathway" id="UPA00275">
    <property type="reaction ID" value="UER00399"/>
</dbReference>
<dbReference type="Proteomes" id="UP000002275">
    <property type="component" value="Chromosome 2"/>
</dbReference>
<dbReference type="GO" id="GO:0005829">
    <property type="term" value="C:cytosol"/>
    <property type="evidence" value="ECO:0007669"/>
    <property type="project" value="TreeGrafter"/>
</dbReference>
<dbReference type="GO" id="GO:0008686">
    <property type="term" value="F:3,4-dihydroxy-2-butanone-4-phosphate synthase activity"/>
    <property type="evidence" value="ECO:0007669"/>
    <property type="project" value="UniProtKB-UniRule"/>
</dbReference>
<dbReference type="GO" id="GO:0000287">
    <property type="term" value="F:magnesium ion binding"/>
    <property type="evidence" value="ECO:0007669"/>
    <property type="project" value="UniProtKB-UniRule"/>
</dbReference>
<dbReference type="GO" id="GO:0030145">
    <property type="term" value="F:manganese ion binding"/>
    <property type="evidence" value="ECO:0007669"/>
    <property type="project" value="UniProtKB-UniRule"/>
</dbReference>
<dbReference type="GO" id="GO:0009231">
    <property type="term" value="P:riboflavin biosynthetic process"/>
    <property type="evidence" value="ECO:0007669"/>
    <property type="project" value="UniProtKB-UniRule"/>
</dbReference>
<dbReference type="FunFam" id="3.90.870.10:FF:000002">
    <property type="entry name" value="3,4-dihydroxy-2-butanone 4-phosphate synthase"/>
    <property type="match status" value="1"/>
</dbReference>
<dbReference type="Gene3D" id="3.90.870.10">
    <property type="entry name" value="DHBP synthase"/>
    <property type="match status" value="1"/>
</dbReference>
<dbReference type="HAMAP" id="MF_00180">
    <property type="entry name" value="RibB"/>
    <property type="match status" value="1"/>
</dbReference>
<dbReference type="InterPro" id="IPR017945">
    <property type="entry name" value="DHBP_synth_RibB-like_a/b_dom"/>
</dbReference>
<dbReference type="InterPro" id="IPR000422">
    <property type="entry name" value="DHBP_synthase_RibB"/>
</dbReference>
<dbReference type="NCBIfam" id="TIGR00506">
    <property type="entry name" value="ribB"/>
    <property type="match status" value="1"/>
</dbReference>
<dbReference type="PANTHER" id="PTHR21327:SF38">
    <property type="entry name" value="3,4-DIHYDROXY-2-BUTANONE 4-PHOSPHATE SYNTHASE"/>
    <property type="match status" value="1"/>
</dbReference>
<dbReference type="PANTHER" id="PTHR21327">
    <property type="entry name" value="GTP CYCLOHYDROLASE II-RELATED"/>
    <property type="match status" value="1"/>
</dbReference>
<dbReference type="Pfam" id="PF00926">
    <property type="entry name" value="DHBP_synthase"/>
    <property type="match status" value="1"/>
</dbReference>
<dbReference type="SUPFAM" id="SSF55821">
    <property type="entry name" value="YrdC/RibB"/>
    <property type="match status" value="1"/>
</dbReference>
<feature type="chain" id="PRO_0000151817" description="3,4-dihydroxy-2-butanone 4-phosphate synthase">
    <location>
        <begin position="1"/>
        <end position="218"/>
    </location>
</feature>
<feature type="binding site" evidence="1">
    <location>
        <begin position="38"/>
        <end position="39"/>
    </location>
    <ligand>
        <name>D-ribulose 5-phosphate</name>
        <dbReference type="ChEBI" id="CHEBI:58121"/>
    </ligand>
</feature>
<feature type="binding site" evidence="1">
    <location>
        <position position="39"/>
    </location>
    <ligand>
        <name>Mg(2+)</name>
        <dbReference type="ChEBI" id="CHEBI:18420"/>
        <label>1</label>
    </ligand>
</feature>
<feature type="binding site" evidence="1">
    <location>
        <position position="39"/>
    </location>
    <ligand>
        <name>Mg(2+)</name>
        <dbReference type="ChEBI" id="CHEBI:18420"/>
        <label>2</label>
    </ligand>
</feature>
<feature type="binding site" evidence="1">
    <location>
        <position position="43"/>
    </location>
    <ligand>
        <name>D-ribulose 5-phosphate</name>
        <dbReference type="ChEBI" id="CHEBI:58121"/>
    </ligand>
</feature>
<feature type="binding site" evidence="1">
    <location>
        <begin position="151"/>
        <end position="155"/>
    </location>
    <ligand>
        <name>D-ribulose 5-phosphate</name>
        <dbReference type="ChEBI" id="CHEBI:58121"/>
    </ligand>
</feature>
<feature type="binding site" evidence="1">
    <location>
        <position position="154"/>
    </location>
    <ligand>
        <name>Mg(2+)</name>
        <dbReference type="ChEBI" id="CHEBI:18420"/>
        <label>2</label>
    </ligand>
</feature>
<feature type="binding site" evidence="1">
    <location>
        <position position="175"/>
    </location>
    <ligand>
        <name>D-ribulose 5-phosphate</name>
        <dbReference type="ChEBI" id="CHEBI:58121"/>
    </ligand>
</feature>
<feature type="site" description="Essential for catalytic activity" evidence="1">
    <location>
        <position position="137"/>
    </location>
</feature>
<feature type="site" description="Essential for catalytic activity" evidence="1">
    <location>
        <position position="175"/>
    </location>
</feature>
<comment type="function">
    <text evidence="1">Catalyzes the conversion of D-ribulose 5-phosphate to formate and 3,4-dihydroxy-2-butanone 4-phosphate.</text>
</comment>
<comment type="catalytic activity">
    <reaction evidence="1">
        <text>D-ribulose 5-phosphate = (2S)-2-hydroxy-3-oxobutyl phosphate + formate + H(+)</text>
        <dbReference type="Rhea" id="RHEA:18457"/>
        <dbReference type="ChEBI" id="CHEBI:15378"/>
        <dbReference type="ChEBI" id="CHEBI:15740"/>
        <dbReference type="ChEBI" id="CHEBI:58121"/>
        <dbReference type="ChEBI" id="CHEBI:58830"/>
        <dbReference type="EC" id="4.1.99.12"/>
    </reaction>
</comment>
<comment type="cofactor">
    <cofactor evidence="1">
        <name>Mg(2+)</name>
        <dbReference type="ChEBI" id="CHEBI:18420"/>
    </cofactor>
    <cofactor evidence="1">
        <name>Mn(2+)</name>
        <dbReference type="ChEBI" id="CHEBI:29035"/>
    </cofactor>
    <text evidence="1">Binds 2 divalent metal cations per subunit. Magnesium or manganese.</text>
</comment>
<comment type="pathway">
    <text evidence="1">Cofactor biosynthesis; riboflavin biosynthesis; 2-hydroxy-3-oxobutyl phosphate from D-ribulose 5-phosphate: step 1/1.</text>
</comment>
<comment type="subunit">
    <text evidence="1">Homodimer.</text>
</comment>
<comment type="similarity">
    <text evidence="1">Belongs to the DHBP synthase family.</text>
</comment>
<protein>
    <recommendedName>
        <fullName evidence="1">3,4-dihydroxy-2-butanone 4-phosphate synthase</fullName>
        <shortName evidence="1">DHBP synthase</shortName>
        <ecNumber evidence="1">4.1.99.12</ecNumber>
    </recommendedName>
</protein>
<sequence>MNQSSLLAEFGDPITRVENALLALKEGRGVLLLDDEDRENEGDIIYSVEHLTNAQMALMIRECSGIVCLCLTDEHANKLELPPMVVNNNSANQTAFTVSIEAKQGVTTGVSAQDRVTTIKTAANPSAKADDLARPGHVFPLRARPGGVLARRGHTEGTVDLMQMAGLQPAGVLCELTNPDGTMAKTPEIIAFGKQHNMPVLTIEDMVMYRNQYDLKLA</sequence>
<organism>
    <name type="scientific">Vibrio vulnificus (strain CMCP6)</name>
    <dbReference type="NCBI Taxonomy" id="216895"/>
    <lineage>
        <taxon>Bacteria</taxon>
        <taxon>Pseudomonadati</taxon>
        <taxon>Pseudomonadota</taxon>
        <taxon>Gammaproteobacteria</taxon>
        <taxon>Vibrionales</taxon>
        <taxon>Vibrionaceae</taxon>
        <taxon>Vibrio</taxon>
    </lineage>
</organism>
<gene>
    <name evidence="1" type="primary">ribB</name>
    <name type="ordered locus">VV2_1426</name>
</gene>
<keyword id="KW-0456">Lyase</keyword>
<keyword id="KW-0460">Magnesium</keyword>
<keyword id="KW-0464">Manganese</keyword>
<keyword id="KW-0479">Metal-binding</keyword>
<keyword id="KW-0686">Riboflavin biosynthesis</keyword>
<proteinExistence type="inferred from homology"/>
<reference key="1">
    <citation type="submission" date="2002-12" db="EMBL/GenBank/DDBJ databases">
        <title>Complete genome sequence of Vibrio vulnificus CMCP6.</title>
        <authorList>
            <person name="Rhee J.H."/>
            <person name="Kim S.Y."/>
            <person name="Chung S.S."/>
            <person name="Kim J.J."/>
            <person name="Moon Y.H."/>
            <person name="Jeong H."/>
            <person name="Choy H.E."/>
        </authorList>
    </citation>
    <scope>NUCLEOTIDE SEQUENCE [LARGE SCALE GENOMIC DNA]</scope>
    <source>
        <strain>CMCP6</strain>
    </source>
</reference>